<keyword id="KW-0025">Alternative splicing</keyword>
<keyword id="KW-0221">Differentiation</keyword>
<keyword id="KW-0339">Growth factor</keyword>
<keyword id="KW-0379">Hydroxylation</keyword>
<keyword id="KW-1185">Reference proteome</keyword>
<keyword id="KW-0964">Secreted</keyword>
<keyword id="KW-0732">Signal</keyword>
<keyword id="KW-0765">Sulfation</keyword>
<evidence type="ECO:0000250" key="1">
    <source>
        <dbReference type="UniProtKB" id="Q3E880"/>
    </source>
</evidence>
<evidence type="ECO:0000255" key="2"/>
<evidence type="ECO:0000256" key="3">
    <source>
        <dbReference type="SAM" id="MobiDB-lite"/>
    </source>
</evidence>
<evidence type="ECO:0000269" key="4">
    <source>
    </source>
</evidence>
<evidence type="ECO:0000269" key="5">
    <source>
    </source>
</evidence>
<evidence type="ECO:0000269" key="6">
    <source>
    </source>
</evidence>
<evidence type="ECO:0000269" key="7">
    <source>
    </source>
</evidence>
<evidence type="ECO:0000303" key="8">
    <source>
    </source>
</evidence>
<evidence type="ECO:0000303" key="9">
    <source>
    </source>
</evidence>
<evidence type="ECO:0000303" key="10">
    <source>
    </source>
</evidence>
<evidence type="ECO:0000305" key="11"/>
<evidence type="ECO:0000305" key="12">
    <source>
    </source>
</evidence>
<evidence type="ECO:0000312" key="13">
    <source>
        <dbReference type="Araport" id="AT3G30350"/>
    </source>
</evidence>
<evidence type="ECO:0000312" key="14">
    <source>
        <dbReference type="EMBL" id="BAB02236.1"/>
    </source>
</evidence>
<proteinExistence type="evidence at protein level"/>
<accession>Q9LI64</accession>
<accession>Q8L8Q0</accession>
<gene>
    <name evidence="10" type="primary">GLV3</name>
    <name evidence="8" type="synonym">RGF4</name>
    <name evidence="13" type="ordered locus">At3g30350</name>
    <name evidence="14" type="ORF">T6J22.14</name>
</gene>
<organism>
    <name type="scientific">Arabidopsis thaliana</name>
    <name type="common">Mouse-ear cress</name>
    <dbReference type="NCBI Taxonomy" id="3702"/>
    <lineage>
        <taxon>Eukaryota</taxon>
        <taxon>Viridiplantae</taxon>
        <taxon>Streptophyta</taxon>
        <taxon>Embryophyta</taxon>
        <taxon>Tracheophyta</taxon>
        <taxon>Spermatophyta</taxon>
        <taxon>Magnoliopsida</taxon>
        <taxon>eudicotyledons</taxon>
        <taxon>Gunneridae</taxon>
        <taxon>Pentapetalae</taxon>
        <taxon>rosids</taxon>
        <taxon>malvids</taxon>
        <taxon>Brassicales</taxon>
        <taxon>Brassicaceae</taxon>
        <taxon>Camelineae</taxon>
        <taxon>Arabidopsis</taxon>
    </lineage>
</organism>
<dbReference type="EMBL" id="AP001314">
    <property type="protein sequence ID" value="BAB02236.1"/>
    <property type="status" value="ALT_SEQ"/>
    <property type="molecule type" value="Genomic_DNA"/>
</dbReference>
<dbReference type="EMBL" id="CP002686">
    <property type="protein sequence ID" value="AEE77634.1"/>
    <property type="molecule type" value="Genomic_DNA"/>
</dbReference>
<dbReference type="EMBL" id="AY088881">
    <property type="protein sequence ID" value="AAM67187.1"/>
    <property type="molecule type" value="mRNA"/>
</dbReference>
<dbReference type="RefSeq" id="NP_001319668.1">
    <property type="nucleotide sequence ID" value="NM_001339050.1"/>
</dbReference>
<dbReference type="RefSeq" id="NP_566853.1">
    <molecule id="Q9LI64-1"/>
    <property type="nucleotide sequence ID" value="NM_113934.3"/>
</dbReference>
<dbReference type="STRING" id="3702.Q9LI64"/>
<dbReference type="EnsemblPlants" id="AT3G30350.1">
    <molecule id="Q9LI64-1"/>
    <property type="protein sequence ID" value="AT3G30350.1"/>
    <property type="gene ID" value="AT3G30350"/>
</dbReference>
<dbReference type="GeneID" id="822736"/>
<dbReference type="Gramene" id="AT3G30350.1">
    <molecule id="Q9LI64-1"/>
    <property type="protein sequence ID" value="AT3G30350.1"/>
    <property type="gene ID" value="AT3G30350"/>
</dbReference>
<dbReference type="KEGG" id="ath:AT3G30350"/>
<dbReference type="Araport" id="AT3G30350"/>
<dbReference type="TAIR" id="AT3G30350">
    <property type="gene designation" value="RGF4"/>
</dbReference>
<dbReference type="HOGENOM" id="CLU_1629335_0_0_1"/>
<dbReference type="InParanoid" id="Q9LI64"/>
<dbReference type="OMA" id="HDFTNTG"/>
<dbReference type="PRO" id="PR:Q9LI64"/>
<dbReference type="Proteomes" id="UP000006548">
    <property type="component" value="Chromosome 3"/>
</dbReference>
<dbReference type="ExpressionAtlas" id="Q9LI64">
    <property type="expression patterns" value="baseline and differential"/>
</dbReference>
<dbReference type="GO" id="GO:0005615">
    <property type="term" value="C:extracellular space"/>
    <property type="evidence" value="ECO:0000250"/>
    <property type="project" value="UniProtKB"/>
</dbReference>
<dbReference type="GO" id="GO:0008083">
    <property type="term" value="F:growth factor activity"/>
    <property type="evidence" value="ECO:0000314"/>
    <property type="project" value="UniProtKB"/>
</dbReference>
<dbReference type="GO" id="GO:0005179">
    <property type="term" value="F:hormone activity"/>
    <property type="evidence" value="ECO:0000314"/>
    <property type="project" value="UniProtKB"/>
</dbReference>
<dbReference type="GO" id="GO:0030154">
    <property type="term" value="P:cell differentiation"/>
    <property type="evidence" value="ECO:0000314"/>
    <property type="project" value="UniProtKB"/>
</dbReference>
<dbReference type="GO" id="GO:0009958">
    <property type="term" value="P:positive gravitropism"/>
    <property type="evidence" value="ECO:0000315"/>
    <property type="project" value="UniProtKB"/>
</dbReference>
<dbReference type="GO" id="GO:0008284">
    <property type="term" value="P:positive regulation of cell population proliferation"/>
    <property type="evidence" value="ECO:0000314"/>
    <property type="project" value="UniProtKB"/>
</dbReference>
<dbReference type="GO" id="GO:2000280">
    <property type="term" value="P:regulation of root development"/>
    <property type="evidence" value="ECO:0000315"/>
    <property type="project" value="UniProtKB"/>
</dbReference>
<feature type="signal peptide" evidence="2">
    <location>
        <begin position="1"/>
        <end position="20"/>
    </location>
</feature>
<feature type="propeptide" id="PRO_0000401444" evidence="1">
    <location>
        <begin position="21"/>
        <end position="141"/>
    </location>
</feature>
<feature type="peptide" id="PRO_0000401445" description="GLV3p">
    <location>
        <begin position="142"/>
        <end position="157"/>
    </location>
</feature>
<feature type="propeptide" id="PRO_0000401446" evidence="1">
    <location>
        <begin position="158"/>
        <end position="163"/>
    </location>
</feature>
<feature type="region of interest" description="Disordered" evidence="3">
    <location>
        <begin position="144"/>
        <end position="163"/>
    </location>
</feature>
<feature type="modified residue" description="Sulfotyrosine" evidence="5">
    <location>
        <position position="143"/>
    </location>
</feature>
<feature type="modified residue" description="Hydroxyproline" evidence="5">
    <location>
        <position position="154"/>
    </location>
</feature>
<feature type="sequence conflict" description="In Ref. 3; AAM67187." evidence="11" ref="3">
    <original>H</original>
    <variation>Q</variation>
    <location>
        <position position="22"/>
    </location>
</feature>
<feature type="sequence conflict" description="In Ref. 3; AAM67187." evidence="11" ref="3">
    <original>HEGGEAG</original>
    <variation>RKGREAC</variation>
    <location>
        <begin position="28"/>
        <end position="34"/>
    </location>
</feature>
<feature type="sequence conflict" description="In Ref. 3; AAM67187." evidence="11" ref="3">
    <original>F</original>
    <variation>Y</variation>
    <location>
        <position position="55"/>
    </location>
</feature>
<feature type="sequence conflict" description="In Ref. 3; AAM67187." evidence="11" ref="3">
    <original>T</original>
    <variation>A</variation>
    <location>
        <position position="66"/>
    </location>
</feature>
<feature type="sequence conflict" description="In Ref. 3; AAM67187." evidence="11" ref="3">
    <original>Y</original>
    <variation>H</variation>
    <location>
        <position position="146"/>
    </location>
</feature>
<sequence length="163" mass="18735">MMRFTIIVIAFLLIIQSLEEEHILVYAHEGGEAGHKSLDYQGDQDSSTLHPKELFDAPRKVRFGRTTRAEKEQVTAMNNDSWSFKISGEHKQTNILADHDTTKNTFCKKMMIIVNDLTSLPTLEPSTSTNDMEKLARLLRDDYPIYSKPRRKPPVNNRAPDKF</sequence>
<name>GLV3_ARATH</name>
<reference key="1">
    <citation type="journal article" date="2000" name="DNA Res.">
        <title>Structural analysis of Arabidopsis thaliana chromosome 3. II. Sequence features of the 4,251,695 bp regions covered by 90 P1, TAC and BAC clones.</title>
        <authorList>
            <person name="Kaneko T."/>
            <person name="Katoh T."/>
            <person name="Sato S."/>
            <person name="Nakamura Y."/>
            <person name="Asamizu E."/>
            <person name="Tabata S."/>
        </authorList>
    </citation>
    <scope>NUCLEOTIDE SEQUENCE [LARGE SCALE GENOMIC DNA]</scope>
    <source>
        <strain>cv. Columbia</strain>
    </source>
</reference>
<reference key="2">
    <citation type="journal article" date="2017" name="Plant J.">
        <title>Araport11: a complete reannotation of the Arabidopsis thaliana reference genome.</title>
        <authorList>
            <person name="Cheng C.Y."/>
            <person name="Krishnakumar V."/>
            <person name="Chan A.P."/>
            <person name="Thibaud-Nissen F."/>
            <person name="Schobel S."/>
            <person name="Town C.D."/>
        </authorList>
    </citation>
    <scope>GENOME REANNOTATION</scope>
    <source>
        <strain>cv. Columbia</strain>
    </source>
</reference>
<reference key="3">
    <citation type="submission" date="2002-03" db="EMBL/GenBank/DDBJ databases">
        <title>Full-length cDNA from Arabidopsis thaliana.</title>
        <authorList>
            <person name="Brover V.V."/>
            <person name="Troukhan M.E."/>
            <person name="Alexandrov N.A."/>
            <person name="Lu Y.-P."/>
            <person name="Flavell R.B."/>
            <person name="Feldmann K.A."/>
        </authorList>
    </citation>
    <scope>NUCLEOTIDE SEQUENCE [LARGE SCALE MRNA]</scope>
</reference>
<reference key="4">
    <citation type="journal article" date="2010" name="Science">
        <title>Secreted peptide signals required for maintenance of root stem cell niche in Arabidopsis.</title>
        <authorList>
            <person name="Matsuzaki Y."/>
            <person name="Ogawa-Ohnishi M."/>
            <person name="Mori A."/>
            <person name="Matsubayashi Y."/>
        </authorList>
    </citation>
    <scope>FUNCTION</scope>
    <scope>GENE FAMILY</scope>
    <scope>NOMENCLATURE</scope>
</reference>
<reference key="5">
    <citation type="journal article" date="2012" name="Dev. Cell">
        <title>GOLVEN secretory peptides regulate auxin carrier turnover during plant gravitropic responses.</title>
        <authorList>
            <person name="Whitford R."/>
            <person name="Fernandez A."/>
            <person name="Tejos R."/>
            <person name="Perez A.C."/>
            <person name="Kleine-Vehn J."/>
            <person name="Vanneste S."/>
            <person name="Drozdzecki A."/>
            <person name="Leitner J."/>
            <person name="Abas L."/>
            <person name="Aerts M."/>
            <person name="Hoogewijs K."/>
            <person name="Baster P."/>
            <person name="De Groodt R."/>
            <person name="Lin Y.-C."/>
            <person name="Storme V."/>
            <person name="Van de Peer Y."/>
            <person name="Beeckman T."/>
            <person name="Madder A."/>
            <person name="Devreese B."/>
            <person name="Luschnig C."/>
            <person name="Friml J."/>
            <person name="Hilson P."/>
        </authorList>
    </citation>
    <scope>FUNCTION</scope>
    <scope>DISRUPTION PHENOTYPE</scope>
    <scope>TISSUE SPECIFICITY</scope>
    <scope>DEVELOPMENTAL STAGE</scope>
    <scope>IDENTIFICATION BY MASS SPECTROMETRY</scope>
    <scope>HYDROXYLATION AT PRO-154</scope>
    <scope>SULFATION AT TYR-143</scope>
</reference>
<reference key="6">
    <citation type="journal article" date="2013" name="Plant Physiol.">
        <title>Transcriptional and functional classification of the GOLVEN/ROOT GROWTH FACTOR/CLE-like signaling peptides reveals their role in lateral root and hair formation.</title>
        <authorList>
            <person name="Fernandez A."/>
            <person name="Drozdzecki A."/>
            <person name="Hoogewijs K."/>
            <person name="Nguyen A."/>
            <person name="Beeckman T."/>
            <person name="Madder A."/>
            <person name="Hilson P."/>
        </authorList>
    </citation>
    <scope>FUNCTION</scope>
    <scope>DISRUPTION PHENOTYPE</scope>
    <scope>TISSUE SPECIFICITY</scope>
    <scope>DEVELOPMENTAL STAGE</scope>
    <source>
        <strain>cv. Columbia</strain>
    </source>
</reference>
<reference key="7">
    <citation type="journal article" date="2016" name="Proc. Natl. Acad. Sci. U.S.A.">
        <title>Identification of three LRR-RKs involved in perception of root meristem growth factor in Arabidopsis.</title>
        <authorList>
            <person name="Shinohara H."/>
            <person name="Mori A."/>
            <person name="Yasue N."/>
            <person name="Sumida K."/>
            <person name="Matsubayashi Y."/>
        </authorList>
    </citation>
    <scope>INTERACTION WITH RGI1; RGI2 AND RGI3</scope>
    <source>
        <strain>cv. Columbia</strain>
    </source>
</reference>
<protein>
    <recommendedName>
        <fullName evidence="10">Protein GOLVEN 3</fullName>
    </recommendedName>
    <alternativeName>
        <fullName evidence="8">Root meristem growth factor 4</fullName>
        <shortName evidence="8">AtRGF4</shortName>
    </alternativeName>
    <component>
        <recommendedName>
            <fullName evidence="9">GLV3p</fullName>
        </recommendedName>
    </component>
</protein>
<comment type="function">
    <molecule>GLV3p</molecule>
    <text evidence="4 5 6">Signaling peptide (root growth factor) required during root gravitropism in a PIN2-traffic dependent manner, thus influencing the formation of auxin gradients (PubMed:22421050, PubMed:23370719). Maintains the postembryonic root stem cell niche (PubMed:20798316).</text>
</comment>
<comment type="subunit">
    <molecule>GLV3p</molecule>
    <text evidence="7">Binds to LRR receptor-like serine/threonine-protein kinases RGI1, RGI2 and RGI3 to trigger their dimerization with SERK proteins and subsequent signaling.</text>
</comment>
<comment type="subcellular location">
    <molecule>GLV3p</molecule>
    <subcellularLocation>
        <location evidence="1">Secreted</location>
    </subcellularLocation>
</comment>
<comment type="alternative products">
    <event type="alternative splicing"/>
    <isoform>
        <id>Q9LI64-1</id>
        <name>1</name>
        <sequence type="displayed"/>
    </isoform>
    <text>A number of isoforms are produced. According to EST sequences.</text>
</comment>
<comment type="tissue specificity">
    <text evidence="5 6">Expressed in roots, specifically in the root apical meristem (RAM).</text>
</comment>
<comment type="developmental stage">
    <text evidence="5 6">In roots, restricted to the root apical meristem (RAM) in a pattern positioned just above the quiescent center (QC), mainly in endodermis, cortex and vascular tissues, with strongest levels within cells in the QC vicinity (PubMed:22421050, PubMed:23370719). Slightly observed in the epidermis (PubMed:23370719). Induced early during lateral root formation (PubMed:23370719).</text>
</comment>
<comment type="disruption phenotype">
    <text evidence="5 6">Dose-dependent altered root gravitropism associated with an altered PIN2 traffic that impairs the formation of auxin gradients, thus leading to an irregular waves root shape.</text>
</comment>
<comment type="miscellaneous">
    <text evidence="12">'Golven' means irregular waves in Dutch.</text>
</comment>
<comment type="similarity">
    <text evidence="11">Belongs to the RGF family.</text>
</comment>
<comment type="sequence caution" evidence="11">
    <conflict type="erroneous gene model prediction">
        <sequence resource="EMBL-CDS" id="BAB02236"/>
    </conflict>
</comment>